<evidence type="ECO:0000255" key="1">
    <source>
        <dbReference type="HAMAP-Rule" id="MF_00210"/>
    </source>
</evidence>
<accession>A3PBY7</accession>
<comment type="function">
    <text evidence="1">Catalyzes the transfer of the enolpyruvyl moiety of phosphoenolpyruvate (PEP) to the 5-hydroxyl of shikimate-3-phosphate (S3P) to produce enolpyruvyl shikimate-3-phosphate and inorganic phosphate.</text>
</comment>
<comment type="catalytic activity">
    <reaction evidence="1">
        <text>3-phosphoshikimate + phosphoenolpyruvate = 5-O-(1-carboxyvinyl)-3-phosphoshikimate + phosphate</text>
        <dbReference type="Rhea" id="RHEA:21256"/>
        <dbReference type="ChEBI" id="CHEBI:43474"/>
        <dbReference type="ChEBI" id="CHEBI:57701"/>
        <dbReference type="ChEBI" id="CHEBI:58702"/>
        <dbReference type="ChEBI" id="CHEBI:145989"/>
        <dbReference type="EC" id="2.5.1.19"/>
    </reaction>
    <physiologicalReaction direction="left-to-right" evidence="1">
        <dbReference type="Rhea" id="RHEA:21257"/>
    </physiologicalReaction>
</comment>
<comment type="pathway">
    <text evidence="1">Metabolic intermediate biosynthesis; chorismate biosynthesis; chorismate from D-erythrose 4-phosphate and phosphoenolpyruvate: step 6/7.</text>
</comment>
<comment type="subunit">
    <text evidence="1">Monomer.</text>
</comment>
<comment type="subcellular location">
    <subcellularLocation>
        <location evidence="1">Cytoplasm</location>
    </subcellularLocation>
</comment>
<comment type="similarity">
    <text evidence="1">Belongs to the EPSP synthase family.</text>
</comment>
<keyword id="KW-0028">Amino-acid biosynthesis</keyword>
<keyword id="KW-0057">Aromatic amino acid biosynthesis</keyword>
<keyword id="KW-0963">Cytoplasm</keyword>
<keyword id="KW-1185">Reference proteome</keyword>
<keyword id="KW-0808">Transferase</keyword>
<reference key="1">
    <citation type="journal article" date="2007" name="PLoS Genet.">
        <title>Patterns and implications of gene gain and loss in the evolution of Prochlorococcus.</title>
        <authorList>
            <person name="Kettler G.C."/>
            <person name="Martiny A.C."/>
            <person name="Huang K."/>
            <person name="Zucker J."/>
            <person name="Coleman M.L."/>
            <person name="Rodrigue S."/>
            <person name="Chen F."/>
            <person name="Lapidus A."/>
            <person name="Ferriera S."/>
            <person name="Johnson J."/>
            <person name="Steglich C."/>
            <person name="Church G.M."/>
            <person name="Richardson P."/>
            <person name="Chisholm S.W."/>
        </authorList>
    </citation>
    <scope>NUCLEOTIDE SEQUENCE [LARGE SCALE GENOMIC DNA]</scope>
    <source>
        <strain>MIT 9301</strain>
    </source>
</reference>
<feature type="chain" id="PRO_1000012459" description="3-phosphoshikimate 1-carboxyvinyltransferase">
    <location>
        <begin position="1"/>
        <end position="436"/>
    </location>
</feature>
<feature type="active site" description="Proton acceptor" evidence="1">
    <location>
        <position position="323"/>
    </location>
</feature>
<feature type="binding site" evidence="1">
    <location>
        <position position="23"/>
    </location>
    <ligand>
        <name>3-phosphoshikimate</name>
        <dbReference type="ChEBI" id="CHEBI:145989"/>
    </ligand>
</feature>
<feature type="binding site" evidence="1">
    <location>
        <position position="23"/>
    </location>
    <ligand>
        <name>phosphoenolpyruvate</name>
        <dbReference type="ChEBI" id="CHEBI:58702"/>
    </ligand>
</feature>
<feature type="binding site" evidence="1">
    <location>
        <position position="24"/>
    </location>
    <ligand>
        <name>3-phosphoshikimate</name>
        <dbReference type="ChEBI" id="CHEBI:145989"/>
    </ligand>
</feature>
<feature type="binding site" evidence="1">
    <location>
        <position position="28"/>
    </location>
    <ligand>
        <name>3-phosphoshikimate</name>
        <dbReference type="ChEBI" id="CHEBI:145989"/>
    </ligand>
</feature>
<feature type="binding site" evidence="1">
    <location>
        <position position="97"/>
    </location>
    <ligand>
        <name>phosphoenolpyruvate</name>
        <dbReference type="ChEBI" id="CHEBI:58702"/>
    </ligand>
</feature>
<feature type="binding site" evidence="1">
    <location>
        <position position="126"/>
    </location>
    <ligand>
        <name>phosphoenolpyruvate</name>
        <dbReference type="ChEBI" id="CHEBI:58702"/>
    </ligand>
</feature>
<feature type="binding site" evidence="1">
    <location>
        <position position="171"/>
    </location>
    <ligand>
        <name>3-phosphoshikimate</name>
        <dbReference type="ChEBI" id="CHEBI:145989"/>
    </ligand>
</feature>
<feature type="binding site" evidence="1">
    <location>
        <position position="173"/>
    </location>
    <ligand>
        <name>3-phosphoshikimate</name>
        <dbReference type="ChEBI" id="CHEBI:145989"/>
    </ligand>
</feature>
<feature type="binding site" evidence="1">
    <location>
        <position position="173"/>
    </location>
    <ligand>
        <name>phosphoenolpyruvate</name>
        <dbReference type="ChEBI" id="CHEBI:58702"/>
    </ligand>
</feature>
<feature type="binding site" evidence="1">
    <location>
        <position position="323"/>
    </location>
    <ligand>
        <name>3-phosphoshikimate</name>
        <dbReference type="ChEBI" id="CHEBI:145989"/>
    </ligand>
</feature>
<feature type="binding site" evidence="1">
    <location>
        <position position="350"/>
    </location>
    <ligand>
        <name>3-phosphoshikimate</name>
        <dbReference type="ChEBI" id="CHEBI:145989"/>
    </ligand>
</feature>
<feature type="binding site" evidence="1">
    <location>
        <position position="354"/>
    </location>
    <ligand>
        <name>phosphoenolpyruvate</name>
        <dbReference type="ChEBI" id="CHEBI:58702"/>
    </ligand>
</feature>
<feature type="binding site" evidence="1">
    <location>
        <position position="396"/>
    </location>
    <ligand>
        <name>phosphoenolpyruvate</name>
        <dbReference type="ChEBI" id="CHEBI:58702"/>
    </ligand>
</feature>
<proteinExistence type="inferred from homology"/>
<organism>
    <name type="scientific">Prochlorococcus marinus (strain MIT 9301)</name>
    <dbReference type="NCBI Taxonomy" id="167546"/>
    <lineage>
        <taxon>Bacteria</taxon>
        <taxon>Bacillati</taxon>
        <taxon>Cyanobacteriota</taxon>
        <taxon>Cyanophyceae</taxon>
        <taxon>Synechococcales</taxon>
        <taxon>Prochlorococcaceae</taxon>
        <taxon>Prochlorococcus</taxon>
    </lineage>
</organism>
<dbReference type="EC" id="2.5.1.19" evidence="1"/>
<dbReference type="EMBL" id="CP000576">
    <property type="protein sequence ID" value="ABO17262.1"/>
    <property type="molecule type" value="Genomic_DNA"/>
</dbReference>
<dbReference type="SMR" id="A3PBY7"/>
<dbReference type="STRING" id="167546.P9301_06391"/>
<dbReference type="KEGG" id="pmg:P9301_06391"/>
<dbReference type="eggNOG" id="COG0128">
    <property type="taxonomic scope" value="Bacteria"/>
</dbReference>
<dbReference type="HOGENOM" id="CLU_024321_0_1_3"/>
<dbReference type="OrthoDB" id="9809920at2"/>
<dbReference type="UniPathway" id="UPA00053">
    <property type="reaction ID" value="UER00089"/>
</dbReference>
<dbReference type="Proteomes" id="UP000001430">
    <property type="component" value="Chromosome"/>
</dbReference>
<dbReference type="GO" id="GO:0005737">
    <property type="term" value="C:cytoplasm"/>
    <property type="evidence" value="ECO:0007669"/>
    <property type="project" value="UniProtKB-SubCell"/>
</dbReference>
<dbReference type="GO" id="GO:0003866">
    <property type="term" value="F:3-phosphoshikimate 1-carboxyvinyltransferase activity"/>
    <property type="evidence" value="ECO:0007669"/>
    <property type="project" value="UniProtKB-UniRule"/>
</dbReference>
<dbReference type="GO" id="GO:0008652">
    <property type="term" value="P:amino acid biosynthetic process"/>
    <property type="evidence" value="ECO:0007669"/>
    <property type="project" value="UniProtKB-KW"/>
</dbReference>
<dbReference type="GO" id="GO:0009073">
    <property type="term" value="P:aromatic amino acid family biosynthetic process"/>
    <property type="evidence" value="ECO:0007669"/>
    <property type="project" value="UniProtKB-KW"/>
</dbReference>
<dbReference type="GO" id="GO:0009423">
    <property type="term" value="P:chorismate biosynthetic process"/>
    <property type="evidence" value="ECO:0007669"/>
    <property type="project" value="UniProtKB-UniRule"/>
</dbReference>
<dbReference type="CDD" id="cd01556">
    <property type="entry name" value="EPSP_synthase"/>
    <property type="match status" value="1"/>
</dbReference>
<dbReference type="FunFam" id="3.65.10.10:FF:000005">
    <property type="entry name" value="3-phosphoshikimate 1-carboxyvinyltransferase"/>
    <property type="match status" value="1"/>
</dbReference>
<dbReference type="FunFam" id="3.65.10.10:FF:000006">
    <property type="entry name" value="3-phosphoshikimate 1-carboxyvinyltransferase"/>
    <property type="match status" value="1"/>
</dbReference>
<dbReference type="Gene3D" id="3.65.10.10">
    <property type="entry name" value="Enolpyruvate transferase domain"/>
    <property type="match status" value="2"/>
</dbReference>
<dbReference type="HAMAP" id="MF_00210">
    <property type="entry name" value="EPSP_synth"/>
    <property type="match status" value="1"/>
</dbReference>
<dbReference type="InterPro" id="IPR001986">
    <property type="entry name" value="Enolpyruvate_Tfrase_dom"/>
</dbReference>
<dbReference type="InterPro" id="IPR036968">
    <property type="entry name" value="Enolpyruvate_Tfrase_sf"/>
</dbReference>
<dbReference type="InterPro" id="IPR006264">
    <property type="entry name" value="EPSP_synthase"/>
</dbReference>
<dbReference type="InterPro" id="IPR023193">
    <property type="entry name" value="EPSP_synthase_CS"/>
</dbReference>
<dbReference type="InterPro" id="IPR013792">
    <property type="entry name" value="RNA3'P_cycl/enolpyr_Trfase_a/b"/>
</dbReference>
<dbReference type="NCBIfam" id="TIGR01356">
    <property type="entry name" value="aroA"/>
    <property type="match status" value="1"/>
</dbReference>
<dbReference type="PANTHER" id="PTHR21090">
    <property type="entry name" value="AROM/DEHYDROQUINATE SYNTHASE"/>
    <property type="match status" value="1"/>
</dbReference>
<dbReference type="PANTHER" id="PTHR21090:SF5">
    <property type="entry name" value="PENTAFUNCTIONAL AROM POLYPEPTIDE"/>
    <property type="match status" value="1"/>
</dbReference>
<dbReference type="Pfam" id="PF00275">
    <property type="entry name" value="EPSP_synthase"/>
    <property type="match status" value="1"/>
</dbReference>
<dbReference type="PIRSF" id="PIRSF000505">
    <property type="entry name" value="EPSPS"/>
    <property type="match status" value="1"/>
</dbReference>
<dbReference type="SUPFAM" id="SSF55205">
    <property type="entry name" value="EPT/RTPC-like"/>
    <property type="match status" value="1"/>
</dbReference>
<dbReference type="PROSITE" id="PS00104">
    <property type="entry name" value="EPSP_SYNTHASE_1"/>
    <property type="match status" value="1"/>
</dbReference>
<dbReference type="PROSITE" id="PS00885">
    <property type="entry name" value="EPSP_SYNTHASE_2"/>
    <property type="match status" value="1"/>
</dbReference>
<protein>
    <recommendedName>
        <fullName evidence="1">3-phosphoshikimate 1-carboxyvinyltransferase</fullName>
        <ecNumber evidence="1">2.5.1.19</ecNumber>
    </recommendedName>
    <alternativeName>
        <fullName evidence="1">5-enolpyruvylshikimate-3-phosphate synthase</fullName>
        <shortName evidence="1">EPSP synthase</shortName>
        <shortName evidence="1">EPSPS</shortName>
    </alternativeName>
</protein>
<sequence length="436" mass="46532">MNNIRTIKGGVNLKGKIKVPGDKSISHRALIIGSIAEGETTIEGFLYSEDPLSTADCLRKLGVNIPEIKKDKPFTISGLGINGLKEPKEILNCGNSGTTMRLLMGLLAGQEGKNFILTGDISLNERPMGRVGKPLSLMGGKIFGREKGNKAPISINGNKLKGCVMGTPVASAQVKSAILLAGLKASGTTSVIEPASSRDHTERMLKAFGADITIRGEFGRNVVIKSGGSLIGQKILIPGDISSASFWMIAASIVPNSEVLIQNVGLNPTRTGILNIMNSMGCNYEILDKSTIAGEPIGSIKVKTSNNLKSFIIEGDILPKLIDEIPILTVAACFCNGVSEIKDAQELRVKETDRLKVMARQLQKFGAEITEKEDGLIINGQSKFHSAEVDSETDHRVAMSLAIASLLAKGTSKIMRADAASVSYPTFWEELAKLTN</sequence>
<name>AROA_PROM0</name>
<gene>
    <name evidence="1" type="primary">aroA</name>
    <name type="ordered locus">P9301_06391</name>
</gene>